<reference key="1">
    <citation type="journal article" date="2004" name="Proc. Natl. Acad. Sci. U.S.A.">
        <title>The complete genomic sequence of Nocardia farcinica IFM 10152.</title>
        <authorList>
            <person name="Ishikawa J."/>
            <person name="Yamashita A."/>
            <person name="Mikami Y."/>
            <person name="Hoshino Y."/>
            <person name="Kurita H."/>
            <person name="Hotta K."/>
            <person name="Shiba T."/>
            <person name="Hattori M."/>
        </authorList>
    </citation>
    <scope>NUCLEOTIDE SEQUENCE [LARGE SCALE GENOMIC DNA]</scope>
    <source>
        <strain>IFM 10152</strain>
    </source>
</reference>
<name>PDXH_NOCFA</name>
<gene>
    <name evidence="1" type="primary">pdxH</name>
    <name type="ordered locus">NFA_6600</name>
</gene>
<keyword id="KW-0285">Flavoprotein</keyword>
<keyword id="KW-0288">FMN</keyword>
<keyword id="KW-0560">Oxidoreductase</keyword>
<keyword id="KW-0664">Pyridoxine biosynthesis</keyword>
<keyword id="KW-1185">Reference proteome</keyword>
<accession>Q5Z236</accession>
<protein>
    <recommendedName>
        <fullName evidence="1">Pyridoxine/pyridoxamine 5'-phosphate oxidase</fullName>
        <ecNumber evidence="1">1.4.3.5</ecNumber>
    </recommendedName>
    <alternativeName>
        <fullName evidence="1">PNP/PMP oxidase</fullName>
        <shortName evidence="1">PNPOx</shortName>
    </alternativeName>
    <alternativeName>
        <fullName evidence="1">Pyridoxal 5'-phosphate synthase</fullName>
    </alternativeName>
</protein>
<feature type="chain" id="PRO_0000167729" description="Pyridoxine/pyridoxamine 5'-phosphate oxidase">
    <location>
        <begin position="1"/>
        <end position="225"/>
    </location>
</feature>
<feature type="binding site" evidence="1">
    <location>
        <begin position="9"/>
        <end position="12"/>
    </location>
    <ligand>
        <name>substrate</name>
    </ligand>
</feature>
<feature type="binding site" evidence="1">
    <location>
        <begin position="73"/>
        <end position="78"/>
    </location>
    <ligand>
        <name>FMN</name>
        <dbReference type="ChEBI" id="CHEBI:58210"/>
    </ligand>
</feature>
<feature type="binding site" evidence="1">
    <location>
        <position position="78"/>
    </location>
    <ligand>
        <name>substrate</name>
    </ligand>
</feature>
<feature type="binding site" evidence="1">
    <location>
        <begin position="88"/>
        <end position="89"/>
    </location>
    <ligand>
        <name>FMN</name>
        <dbReference type="ChEBI" id="CHEBI:58210"/>
    </ligand>
</feature>
<feature type="binding site" evidence="1">
    <location>
        <position position="95"/>
    </location>
    <ligand>
        <name>FMN</name>
        <dbReference type="ChEBI" id="CHEBI:58210"/>
    </ligand>
</feature>
<feature type="binding site" evidence="1">
    <location>
        <position position="117"/>
    </location>
    <ligand>
        <name>FMN</name>
        <dbReference type="ChEBI" id="CHEBI:58210"/>
    </ligand>
</feature>
<feature type="binding site" evidence="1">
    <location>
        <position position="135"/>
    </location>
    <ligand>
        <name>substrate</name>
    </ligand>
</feature>
<feature type="binding site" evidence="1">
    <location>
        <position position="139"/>
    </location>
    <ligand>
        <name>substrate</name>
    </ligand>
</feature>
<feature type="binding site" evidence="1">
    <location>
        <position position="143"/>
    </location>
    <ligand>
        <name>substrate</name>
    </ligand>
</feature>
<feature type="binding site" evidence="1">
    <location>
        <begin position="152"/>
        <end position="153"/>
    </location>
    <ligand>
        <name>FMN</name>
        <dbReference type="ChEBI" id="CHEBI:58210"/>
    </ligand>
</feature>
<feature type="binding site" evidence="1">
    <location>
        <position position="198"/>
    </location>
    <ligand>
        <name>FMN</name>
        <dbReference type="ChEBI" id="CHEBI:58210"/>
    </ligand>
</feature>
<feature type="binding site" evidence="1">
    <location>
        <begin position="204"/>
        <end position="206"/>
    </location>
    <ligand>
        <name>substrate</name>
    </ligand>
</feature>
<feature type="binding site" evidence="1">
    <location>
        <position position="208"/>
    </location>
    <ligand>
        <name>FMN</name>
        <dbReference type="ChEBI" id="CHEBI:58210"/>
    </ligand>
</feature>
<sequence>MAADLAAMRVDYGGVPSGSGEDVDLDEAWLAGGWEPLLRNWIEQATAVDIAEPNAMVLATVAVVDGVPRPASRTVLCKGLSPEGVTFYTNYDSAKGTQLAAVPYAAATFVWPVLGRQVHLRGPVERTSAEQTAVYWRSRPRDSQLGAWASQQSRPIDSRAALDRALAEVTARFAGVDEIPVPPHWGGYLLRPEQVEFWQGRRGRLHNRLLVRVAGERMTVERLQP</sequence>
<comment type="function">
    <text evidence="1">Catalyzes the oxidation of either pyridoxine 5'-phosphate (PNP) or pyridoxamine 5'-phosphate (PMP) into pyridoxal 5'-phosphate (PLP).</text>
</comment>
<comment type="catalytic activity">
    <reaction evidence="1">
        <text>pyridoxamine 5'-phosphate + O2 + H2O = pyridoxal 5'-phosphate + H2O2 + NH4(+)</text>
        <dbReference type="Rhea" id="RHEA:15817"/>
        <dbReference type="ChEBI" id="CHEBI:15377"/>
        <dbReference type="ChEBI" id="CHEBI:15379"/>
        <dbReference type="ChEBI" id="CHEBI:16240"/>
        <dbReference type="ChEBI" id="CHEBI:28938"/>
        <dbReference type="ChEBI" id="CHEBI:58451"/>
        <dbReference type="ChEBI" id="CHEBI:597326"/>
        <dbReference type="EC" id="1.4.3.5"/>
    </reaction>
</comment>
<comment type="catalytic activity">
    <reaction evidence="1">
        <text>pyridoxine 5'-phosphate + O2 = pyridoxal 5'-phosphate + H2O2</text>
        <dbReference type="Rhea" id="RHEA:15149"/>
        <dbReference type="ChEBI" id="CHEBI:15379"/>
        <dbReference type="ChEBI" id="CHEBI:16240"/>
        <dbReference type="ChEBI" id="CHEBI:58589"/>
        <dbReference type="ChEBI" id="CHEBI:597326"/>
        <dbReference type="EC" id="1.4.3.5"/>
    </reaction>
</comment>
<comment type="cofactor">
    <cofactor evidence="1">
        <name>FMN</name>
        <dbReference type="ChEBI" id="CHEBI:58210"/>
    </cofactor>
    <text evidence="1">Binds 1 FMN per subunit.</text>
</comment>
<comment type="pathway">
    <text evidence="1">Cofactor metabolism; pyridoxal 5'-phosphate salvage; pyridoxal 5'-phosphate from pyridoxamine 5'-phosphate: step 1/1.</text>
</comment>
<comment type="pathway">
    <text evidence="1">Cofactor metabolism; pyridoxal 5'-phosphate salvage; pyridoxal 5'-phosphate from pyridoxine 5'-phosphate: step 1/1.</text>
</comment>
<comment type="subunit">
    <text evidence="1">Homodimer.</text>
</comment>
<comment type="similarity">
    <text evidence="1">Belongs to the pyridoxamine 5'-phosphate oxidase family.</text>
</comment>
<comment type="sequence caution" evidence="2">
    <conflict type="erroneous initiation">
        <sequence resource="EMBL-CDS" id="BAD55505"/>
    </conflict>
</comment>
<proteinExistence type="inferred from homology"/>
<dbReference type="EC" id="1.4.3.5" evidence="1"/>
<dbReference type="EMBL" id="AP006618">
    <property type="protein sequence ID" value="BAD55505.1"/>
    <property type="status" value="ALT_INIT"/>
    <property type="molecule type" value="Genomic_DNA"/>
</dbReference>
<dbReference type="SMR" id="Q5Z236"/>
<dbReference type="STRING" id="247156.NFA_6600"/>
<dbReference type="KEGG" id="nfa:NFA_6600"/>
<dbReference type="eggNOG" id="COG0259">
    <property type="taxonomic scope" value="Bacteria"/>
</dbReference>
<dbReference type="HOGENOM" id="CLU_032263_2_2_11"/>
<dbReference type="UniPathway" id="UPA01068">
    <property type="reaction ID" value="UER00304"/>
</dbReference>
<dbReference type="UniPathway" id="UPA01068">
    <property type="reaction ID" value="UER00305"/>
</dbReference>
<dbReference type="Proteomes" id="UP000006820">
    <property type="component" value="Chromosome"/>
</dbReference>
<dbReference type="GO" id="GO:0010181">
    <property type="term" value="F:FMN binding"/>
    <property type="evidence" value="ECO:0007669"/>
    <property type="project" value="UniProtKB-UniRule"/>
</dbReference>
<dbReference type="GO" id="GO:0004733">
    <property type="term" value="F:pyridoxamine phosphate oxidase activity"/>
    <property type="evidence" value="ECO:0007669"/>
    <property type="project" value="UniProtKB-UniRule"/>
</dbReference>
<dbReference type="GO" id="GO:0008615">
    <property type="term" value="P:pyridoxine biosynthetic process"/>
    <property type="evidence" value="ECO:0007669"/>
    <property type="project" value="UniProtKB-KW"/>
</dbReference>
<dbReference type="Gene3D" id="2.30.110.10">
    <property type="entry name" value="Electron Transport, Fmn-binding Protein, Chain A"/>
    <property type="match status" value="1"/>
</dbReference>
<dbReference type="HAMAP" id="MF_01629">
    <property type="entry name" value="PdxH"/>
    <property type="match status" value="1"/>
</dbReference>
<dbReference type="InterPro" id="IPR000659">
    <property type="entry name" value="Pyridox_Oxase"/>
</dbReference>
<dbReference type="InterPro" id="IPR019740">
    <property type="entry name" value="Pyridox_Oxase_CS"/>
</dbReference>
<dbReference type="InterPro" id="IPR011576">
    <property type="entry name" value="Pyridox_Oxase_N"/>
</dbReference>
<dbReference type="InterPro" id="IPR019576">
    <property type="entry name" value="Pyridoxamine_oxidase_dimer_C"/>
</dbReference>
<dbReference type="InterPro" id="IPR012349">
    <property type="entry name" value="Split_barrel_FMN-bd"/>
</dbReference>
<dbReference type="NCBIfam" id="TIGR00558">
    <property type="entry name" value="pdxH"/>
    <property type="match status" value="1"/>
</dbReference>
<dbReference type="NCBIfam" id="NF004231">
    <property type="entry name" value="PRK05679.1"/>
    <property type="match status" value="1"/>
</dbReference>
<dbReference type="PANTHER" id="PTHR10851:SF0">
    <property type="entry name" value="PYRIDOXINE-5'-PHOSPHATE OXIDASE"/>
    <property type="match status" value="1"/>
</dbReference>
<dbReference type="PANTHER" id="PTHR10851">
    <property type="entry name" value="PYRIDOXINE-5-PHOSPHATE OXIDASE"/>
    <property type="match status" value="1"/>
</dbReference>
<dbReference type="Pfam" id="PF10590">
    <property type="entry name" value="PNP_phzG_C"/>
    <property type="match status" value="1"/>
</dbReference>
<dbReference type="Pfam" id="PF01243">
    <property type="entry name" value="PNPOx_N"/>
    <property type="match status" value="1"/>
</dbReference>
<dbReference type="PIRSF" id="PIRSF000190">
    <property type="entry name" value="Pyd_amn-ph_oxd"/>
    <property type="match status" value="1"/>
</dbReference>
<dbReference type="SUPFAM" id="SSF50475">
    <property type="entry name" value="FMN-binding split barrel"/>
    <property type="match status" value="1"/>
</dbReference>
<dbReference type="PROSITE" id="PS01064">
    <property type="entry name" value="PYRIDOX_OXIDASE"/>
    <property type="match status" value="1"/>
</dbReference>
<organism>
    <name type="scientific">Nocardia farcinica (strain IFM 10152)</name>
    <dbReference type="NCBI Taxonomy" id="247156"/>
    <lineage>
        <taxon>Bacteria</taxon>
        <taxon>Bacillati</taxon>
        <taxon>Actinomycetota</taxon>
        <taxon>Actinomycetes</taxon>
        <taxon>Mycobacteriales</taxon>
        <taxon>Nocardiaceae</taxon>
        <taxon>Nocardia</taxon>
    </lineage>
</organism>
<evidence type="ECO:0000255" key="1">
    <source>
        <dbReference type="HAMAP-Rule" id="MF_01629"/>
    </source>
</evidence>
<evidence type="ECO:0000305" key="2"/>